<keyword id="KW-0067">ATP-binding</keyword>
<keyword id="KW-0436">Ligase</keyword>
<keyword id="KW-0460">Magnesium</keyword>
<keyword id="KW-0479">Metal-binding</keyword>
<keyword id="KW-0520">NAD</keyword>
<keyword id="KW-0547">Nucleotide-binding</keyword>
<gene>
    <name evidence="1" type="primary">nadE</name>
    <name type="ordered locus">SZO_03930</name>
</gene>
<proteinExistence type="inferred from homology"/>
<dbReference type="EC" id="6.3.1.5" evidence="1"/>
<dbReference type="EMBL" id="FM204884">
    <property type="protein sequence ID" value="CAW98269.1"/>
    <property type="molecule type" value="Genomic_DNA"/>
</dbReference>
<dbReference type="SMR" id="C0MGX1"/>
<dbReference type="KEGG" id="seq:SZO_03930"/>
<dbReference type="eggNOG" id="COG0171">
    <property type="taxonomic scope" value="Bacteria"/>
</dbReference>
<dbReference type="HOGENOM" id="CLU_059327_3_0_9"/>
<dbReference type="UniPathway" id="UPA00253">
    <property type="reaction ID" value="UER00333"/>
</dbReference>
<dbReference type="Proteomes" id="UP000001368">
    <property type="component" value="Chromosome"/>
</dbReference>
<dbReference type="GO" id="GO:0005737">
    <property type="term" value="C:cytoplasm"/>
    <property type="evidence" value="ECO:0007669"/>
    <property type="project" value="InterPro"/>
</dbReference>
<dbReference type="GO" id="GO:0005524">
    <property type="term" value="F:ATP binding"/>
    <property type="evidence" value="ECO:0007669"/>
    <property type="project" value="UniProtKB-UniRule"/>
</dbReference>
<dbReference type="GO" id="GO:0004359">
    <property type="term" value="F:glutaminase activity"/>
    <property type="evidence" value="ECO:0007669"/>
    <property type="project" value="InterPro"/>
</dbReference>
<dbReference type="GO" id="GO:0046872">
    <property type="term" value="F:metal ion binding"/>
    <property type="evidence" value="ECO:0007669"/>
    <property type="project" value="UniProtKB-KW"/>
</dbReference>
<dbReference type="GO" id="GO:0003952">
    <property type="term" value="F:NAD+ synthase (glutamine-hydrolyzing) activity"/>
    <property type="evidence" value="ECO:0007669"/>
    <property type="project" value="InterPro"/>
</dbReference>
<dbReference type="GO" id="GO:0008795">
    <property type="term" value="F:NAD+ synthase activity"/>
    <property type="evidence" value="ECO:0007669"/>
    <property type="project" value="UniProtKB-UniRule"/>
</dbReference>
<dbReference type="GO" id="GO:0009435">
    <property type="term" value="P:NAD biosynthetic process"/>
    <property type="evidence" value="ECO:0007669"/>
    <property type="project" value="UniProtKB-UniRule"/>
</dbReference>
<dbReference type="CDD" id="cd00553">
    <property type="entry name" value="NAD_synthase"/>
    <property type="match status" value="1"/>
</dbReference>
<dbReference type="FunFam" id="3.40.50.620:FF:000015">
    <property type="entry name" value="NH(3)-dependent NAD(+) synthetase"/>
    <property type="match status" value="1"/>
</dbReference>
<dbReference type="Gene3D" id="3.40.50.620">
    <property type="entry name" value="HUPs"/>
    <property type="match status" value="1"/>
</dbReference>
<dbReference type="HAMAP" id="MF_00193">
    <property type="entry name" value="NadE_ammonia_dep"/>
    <property type="match status" value="1"/>
</dbReference>
<dbReference type="InterPro" id="IPR022310">
    <property type="entry name" value="NAD/GMP_synthase"/>
</dbReference>
<dbReference type="InterPro" id="IPR003694">
    <property type="entry name" value="NAD_synthase"/>
</dbReference>
<dbReference type="InterPro" id="IPR022926">
    <property type="entry name" value="NH(3)-dep_NAD(+)_synth"/>
</dbReference>
<dbReference type="InterPro" id="IPR014729">
    <property type="entry name" value="Rossmann-like_a/b/a_fold"/>
</dbReference>
<dbReference type="NCBIfam" id="TIGR00552">
    <property type="entry name" value="nadE"/>
    <property type="match status" value="1"/>
</dbReference>
<dbReference type="NCBIfam" id="NF001979">
    <property type="entry name" value="PRK00768.1"/>
    <property type="match status" value="1"/>
</dbReference>
<dbReference type="PANTHER" id="PTHR23090">
    <property type="entry name" value="NH 3 /GLUTAMINE-DEPENDENT NAD + SYNTHETASE"/>
    <property type="match status" value="1"/>
</dbReference>
<dbReference type="PANTHER" id="PTHR23090:SF7">
    <property type="entry name" value="NH(3)-DEPENDENT NAD(+) SYNTHETASE"/>
    <property type="match status" value="1"/>
</dbReference>
<dbReference type="Pfam" id="PF02540">
    <property type="entry name" value="NAD_synthase"/>
    <property type="match status" value="1"/>
</dbReference>
<dbReference type="SUPFAM" id="SSF52402">
    <property type="entry name" value="Adenine nucleotide alpha hydrolases-like"/>
    <property type="match status" value="1"/>
</dbReference>
<protein>
    <recommendedName>
        <fullName evidence="1">NH(3)-dependent NAD(+) synthetase</fullName>
        <ecNumber evidence="1">6.3.1.5</ecNumber>
    </recommendedName>
</protein>
<evidence type="ECO:0000255" key="1">
    <source>
        <dbReference type="HAMAP-Rule" id="MF_00193"/>
    </source>
</evidence>
<sequence length="274" mass="30326">MTLQEDIIRQLGVKAVIDPKQEIRQSVDFLKAYLLKHPFLKTYVLGISGGQDSSLAGKLAQMAIEELRAETGDEQYQFIAVRLPYGVQADEADAQKALAFIQPDQALTVNIKEAVDGQLRALETAGLEISDFNKGNIKARQRMISQYAIAGQTAGAVIGTDHAAENVMGFFTKFGDGGADILPLFRLTKRQGKALLKALKADPSLYEKVPTADLEDKKPGLADEVALGVSYQEIDDYLEGHTISAEAQARIEDWWHKGQHKRHLPITIFDDFWK</sequence>
<name>NADE_STRS7</name>
<organism>
    <name type="scientific">Streptococcus equi subsp. zooepidemicus (strain H70)</name>
    <dbReference type="NCBI Taxonomy" id="553483"/>
    <lineage>
        <taxon>Bacteria</taxon>
        <taxon>Bacillati</taxon>
        <taxon>Bacillota</taxon>
        <taxon>Bacilli</taxon>
        <taxon>Lactobacillales</taxon>
        <taxon>Streptococcaceae</taxon>
        <taxon>Streptococcus</taxon>
    </lineage>
</organism>
<accession>C0MGX1</accession>
<comment type="function">
    <text evidence="1">Catalyzes the ATP-dependent amidation of deamido-NAD to form NAD. Uses ammonia as a nitrogen source.</text>
</comment>
<comment type="catalytic activity">
    <reaction evidence="1">
        <text>deamido-NAD(+) + NH4(+) + ATP = AMP + diphosphate + NAD(+) + H(+)</text>
        <dbReference type="Rhea" id="RHEA:21188"/>
        <dbReference type="ChEBI" id="CHEBI:15378"/>
        <dbReference type="ChEBI" id="CHEBI:28938"/>
        <dbReference type="ChEBI" id="CHEBI:30616"/>
        <dbReference type="ChEBI" id="CHEBI:33019"/>
        <dbReference type="ChEBI" id="CHEBI:57540"/>
        <dbReference type="ChEBI" id="CHEBI:58437"/>
        <dbReference type="ChEBI" id="CHEBI:456215"/>
        <dbReference type="EC" id="6.3.1.5"/>
    </reaction>
</comment>
<comment type="pathway">
    <text evidence="1">Cofactor biosynthesis; NAD(+) biosynthesis; NAD(+) from deamido-NAD(+) (ammonia route): step 1/1.</text>
</comment>
<comment type="subunit">
    <text evidence="1">Homodimer.</text>
</comment>
<comment type="similarity">
    <text evidence="1">Belongs to the NAD synthetase family.</text>
</comment>
<reference key="1">
    <citation type="journal article" date="2009" name="PLoS Pathog.">
        <title>Genomic evidence for the evolution of Streptococcus equi: host restriction, increased virulence, and genetic exchange with human pathogens.</title>
        <authorList>
            <person name="Holden M.T.G."/>
            <person name="Heather Z."/>
            <person name="Paillot R."/>
            <person name="Steward K.F."/>
            <person name="Webb K."/>
            <person name="Ainslie F."/>
            <person name="Jourdan T."/>
            <person name="Bason N.C."/>
            <person name="Holroyd N.E."/>
            <person name="Mungall K."/>
            <person name="Quail M.A."/>
            <person name="Sanders M."/>
            <person name="Simmonds M."/>
            <person name="Willey D."/>
            <person name="Brooks K."/>
            <person name="Aanensen D.M."/>
            <person name="Spratt B.G."/>
            <person name="Jolley K.A."/>
            <person name="Maiden M.C.J."/>
            <person name="Kehoe M."/>
            <person name="Chanter N."/>
            <person name="Bentley S.D."/>
            <person name="Robinson C."/>
            <person name="Maskell D.J."/>
            <person name="Parkhill J."/>
            <person name="Waller A.S."/>
        </authorList>
    </citation>
    <scope>NUCLEOTIDE SEQUENCE [LARGE SCALE GENOMIC DNA]</scope>
    <source>
        <strain>H70</strain>
    </source>
</reference>
<feature type="chain" id="PRO_1000204022" description="NH(3)-dependent NAD(+) synthetase">
    <location>
        <begin position="1"/>
        <end position="274"/>
    </location>
</feature>
<feature type="binding site" evidence="1">
    <location>
        <begin position="46"/>
        <end position="53"/>
    </location>
    <ligand>
        <name>ATP</name>
        <dbReference type="ChEBI" id="CHEBI:30616"/>
    </ligand>
</feature>
<feature type="binding site" evidence="1">
    <location>
        <position position="52"/>
    </location>
    <ligand>
        <name>Mg(2+)</name>
        <dbReference type="ChEBI" id="CHEBI:18420"/>
    </ligand>
</feature>
<feature type="binding site" evidence="1">
    <location>
        <position position="140"/>
    </location>
    <ligand>
        <name>deamido-NAD(+)</name>
        <dbReference type="ChEBI" id="CHEBI:58437"/>
    </ligand>
</feature>
<feature type="binding site" evidence="1">
    <location>
        <position position="160"/>
    </location>
    <ligand>
        <name>ATP</name>
        <dbReference type="ChEBI" id="CHEBI:30616"/>
    </ligand>
</feature>
<feature type="binding site" evidence="1">
    <location>
        <position position="165"/>
    </location>
    <ligand>
        <name>Mg(2+)</name>
        <dbReference type="ChEBI" id="CHEBI:18420"/>
    </ligand>
</feature>
<feature type="binding site" evidence="1">
    <location>
        <position position="173"/>
    </location>
    <ligand>
        <name>deamido-NAD(+)</name>
        <dbReference type="ChEBI" id="CHEBI:58437"/>
    </ligand>
</feature>
<feature type="binding site" evidence="1">
    <location>
        <position position="180"/>
    </location>
    <ligand>
        <name>deamido-NAD(+)</name>
        <dbReference type="ChEBI" id="CHEBI:58437"/>
    </ligand>
</feature>
<feature type="binding site" evidence="1">
    <location>
        <position position="189"/>
    </location>
    <ligand>
        <name>ATP</name>
        <dbReference type="ChEBI" id="CHEBI:30616"/>
    </ligand>
</feature>
<feature type="binding site" evidence="1">
    <location>
        <position position="211"/>
    </location>
    <ligand>
        <name>ATP</name>
        <dbReference type="ChEBI" id="CHEBI:30616"/>
    </ligand>
</feature>
<feature type="binding site" evidence="1">
    <location>
        <begin position="260"/>
        <end position="261"/>
    </location>
    <ligand>
        <name>deamido-NAD(+)</name>
        <dbReference type="ChEBI" id="CHEBI:58437"/>
    </ligand>
</feature>